<comment type="function">
    <text evidence="1">Presumably involved in the processing and regular turnover of intracellular proteins. Catalyzes the removal of unsubstituted N-terminal amino acids from various peptides.</text>
</comment>
<comment type="catalytic activity">
    <reaction evidence="1">
        <text>Release of an N-terminal amino acid, Xaa-|-Yaa-, in which Xaa is preferably Leu, but may be other amino acids including Pro although not Arg or Lys, and Yaa may be Pro. Amino acid amides and methyl esters are also readily hydrolyzed, but rates on arylamides are exceedingly low.</text>
        <dbReference type="EC" id="3.4.11.1"/>
    </reaction>
</comment>
<comment type="catalytic activity">
    <reaction evidence="1">
        <text>Release of an N-terminal amino acid, preferentially leucine, but not glutamic or aspartic acids.</text>
        <dbReference type="EC" id="3.4.11.10"/>
    </reaction>
</comment>
<comment type="cofactor">
    <cofactor evidence="1">
        <name>Mn(2+)</name>
        <dbReference type="ChEBI" id="CHEBI:29035"/>
    </cofactor>
    <text evidence="1">Binds 2 manganese ions per subunit.</text>
</comment>
<comment type="subcellular location">
    <subcellularLocation>
        <location evidence="1">Cytoplasm</location>
    </subcellularLocation>
</comment>
<comment type="similarity">
    <text evidence="1">Belongs to the peptidase M17 family.</text>
</comment>
<gene>
    <name evidence="1" type="primary">pepA</name>
    <name type="ordered locus">MAE_62000</name>
</gene>
<evidence type="ECO:0000255" key="1">
    <source>
        <dbReference type="HAMAP-Rule" id="MF_00181"/>
    </source>
</evidence>
<reference key="1">
    <citation type="journal article" date="2007" name="DNA Res.">
        <title>Complete genomic structure of the bloom-forming toxic cyanobacterium Microcystis aeruginosa NIES-843.</title>
        <authorList>
            <person name="Kaneko T."/>
            <person name="Nakajima N."/>
            <person name="Okamoto S."/>
            <person name="Suzuki I."/>
            <person name="Tanabe Y."/>
            <person name="Tamaoki M."/>
            <person name="Nakamura Y."/>
            <person name="Kasai F."/>
            <person name="Watanabe A."/>
            <person name="Kawashima K."/>
            <person name="Kishida Y."/>
            <person name="Ono A."/>
            <person name="Shimizu Y."/>
            <person name="Takahashi C."/>
            <person name="Minami C."/>
            <person name="Fujishiro T."/>
            <person name="Kohara M."/>
            <person name="Katoh M."/>
            <person name="Nakazaki N."/>
            <person name="Nakayama S."/>
            <person name="Yamada M."/>
            <person name="Tabata S."/>
            <person name="Watanabe M.M."/>
        </authorList>
    </citation>
    <scope>NUCLEOTIDE SEQUENCE [LARGE SCALE GENOMIC DNA]</scope>
    <source>
        <strain>NIES-843 / IAM M-247</strain>
    </source>
</reference>
<protein>
    <recommendedName>
        <fullName evidence="1">Probable cytosol aminopeptidase</fullName>
        <ecNumber evidence="1">3.4.11.1</ecNumber>
    </recommendedName>
    <alternativeName>
        <fullName evidence="1">Leucine aminopeptidase</fullName>
        <shortName evidence="1">LAP</shortName>
        <ecNumber evidence="1">3.4.11.10</ecNumber>
    </alternativeName>
    <alternativeName>
        <fullName evidence="1">Leucyl aminopeptidase</fullName>
    </alternativeName>
</protein>
<dbReference type="EC" id="3.4.11.1" evidence="1"/>
<dbReference type="EC" id="3.4.11.10" evidence="1"/>
<dbReference type="EMBL" id="AP009552">
    <property type="protein sequence ID" value="BAG06022.1"/>
    <property type="molecule type" value="Genomic_DNA"/>
</dbReference>
<dbReference type="RefSeq" id="WP_012268315.1">
    <property type="nucleotide sequence ID" value="NC_010296.1"/>
</dbReference>
<dbReference type="SMR" id="B0JL23"/>
<dbReference type="STRING" id="449447.MAE_62000"/>
<dbReference type="MEROPS" id="M17.A03"/>
<dbReference type="PaxDb" id="449447-MAE_62000"/>
<dbReference type="EnsemblBacteria" id="BAG06022">
    <property type="protein sequence ID" value="BAG06022"/>
    <property type="gene ID" value="MAE_62000"/>
</dbReference>
<dbReference type="KEGG" id="mar:MAE_62000"/>
<dbReference type="PATRIC" id="fig|449447.4.peg.5680"/>
<dbReference type="eggNOG" id="COG0260">
    <property type="taxonomic scope" value="Bacteria"/>
</dbReference>
<dbReference type="HOGENOM" id="CLU_013734_2_2_3"/>
<dbReference type="BioCyc" id="MAER449447:MAE_RS27100-MONOMER"/>
<dbReference type="Proteomes" id="UP000001510">
    <property type="component" value="Chromosome"/>
</dbReference>
<dbReference type="GO" id="GO:0005737">
    <property type="term" value="C:cytoplasm"/>
    <property type="evidence" value="ECO:0007669"/>
    <property type="project" value="UniProtKB-SubCell"/>
</dbReference>
<dbReference type="GO" id="GO:0030145">
    <property type="term" value="F:manganese ion binding"/>
    <property type="evidence" value="ECO:0007669"/>
    <property type="project" value="UniProtKB-UniRule"/>
</dbReference>
<dbReference type="GO" id="GO:0070006">
    <property type="term" value="F:metalloaminopeptidase activity"/>
    <property type="evidence" value="ECO:0007669"/>
    <property type="project" value="InterPro"/>
</dbReference>
<dbReference type="GO" id="GO:0006508">
    <property type="term" value="P:proteolysis"/>
    <property type="evidence" value="ECO:0007669"/>
    <property type="project" value="UniProtKB-KW"/>
</dbReference>
<dbReference type="CDD" id="cd00433">
    <property type="entry name" value="Peptidase_M17"/>
    <property type="match status" value="1"/>
</dbReference>
<dbReference type="Gene3D" id="3.40.220.10">
    <property type="entry name" value="Leucine Aminopeptidase, subunit E, domain 1"/>
    <property type="match status" value="1"/>
</dbReference>
<dbReference type="Gene3D" id="3.40.630.10">
    <property type="entry name" value="Zn peptidases"/>
    <property type="match status" value="1"/>
</dbReference>
<dbReference type="HAMAP" id="MF_00181">
    <property type="entry name" value="Cytosol_peptidase_M17"/>
    <property type="match status" value="1"/>
</dbReference>
<dbReference type="InterPro" id="IPR011356">
    <property type="entry name" value="Leucine_aapep/pepB"/>
</dbReference>
<dbReference type="InterPro" id="IPR043472">
    <property type="entry name" value="Macro_dom-like"/>
</dbReference>
<dbReference type="InterPro" id="IPR000819">
    <property type="entry name" value="Peptidase_M17_C"/>
</dbReference>
<dbReference type="InterPro" id="IPR023042">
    <property type="entry name" value="Peptidase_M17_leu_NH2_pept"/>
</dbReference>
<dbReference type="InterPro" id="IPR008283">
    <property type="entry name" value="Peptidase_M17_N"/>
</dbReference>
<dbReference type="NCBIfam" id="NF002073">
    <property type="entry name" value="PRK00913.1-2"/>
    <property type="match status" value="1"/>
</dbReference>
<dbReference type="NCBIfam" id="NF002076">
    <property type="entry name" value="PRK00913.2-3"/>
    <property type="match status" value="1"/>
</dbReference>
<dbReference type="PANTHER" id="PTHR11963:SF23">
    <property type="entry name" value="CYTOSOL AMINOPEPTIDASE"/>
    <property type="match status" value="1"/>
</dbReference>
<dbReference type="PANTHER" id="PTHR11963">
    <property type="entry name" value="LEUCINE AMINOPEPTIDASE-RELATED"/>
    <property type="match status" value="1"/>
</dbReference>
<dbReference type="Pfam" id="PF00883">
    <property type="entry name" value="Peptidase_M17"/>
    <property type="match status" value="1"/>
</dbReference>
<dbReference type="Pfam" id="PF02789">
    <property type="entry name" value="Peptidase_M17_N"/>
    <property type="match status" value="1"/>
</dbReference>
<dbReference type="PRINTS" id="PR00481">
    <property type="entry name" value="LAMNOPPTDASE"/>
</dbReference>
<dbReference type="SUPFAM" id="SSF52949">
    <property type="entry name" value="Macro domain-like"/>
    <property type="match status" value="1"/>
</dbReference>
<dbReference type="SUPFAM" id="SSF53187">
    <property type="entry name" value="Zn-dependent exopeptidases"/>
    <property type="match status" value="1"/>
</dbReference>
<dbReference type="PROSITE" id="PS00631">
    <property type="entry name" value="CYTOSOL_AP"/>
    <property type="match status" value="1"/>
</dbReference>
<keyword id="KW-0031">Aminopeptidase</keyword>
<keyword id="KW-0963">Cytoplasm</keyword>
<keyword id="KW-0378">Hydrolase</keyword>
<keyword id="KW-0464">Manganese</keyword>
<keyword id="KW-0479">Metal-binding</keyword>
<keyword id="KW-0645">Protease</keyword>
<feature type="chain" id="PRO_1000077278" description="Probable cytosol aminopeptidase">
    <location>
        <begin position="1"/>
        <end position="490"/>
    </location>
</feature>
<feature type="active site" evidence="1">
    <location>
        <position position="270"/>
    </location>
</feature>
<feature type="active site" evidence="1">
    <location>
        <position position="345"/>
    </location>
</feature>
<feature type="binding site" evidence="1">
    <location>
        <position position="258"/>
    </location>
    <ligand>
        <name>Mn(2+)</name>
        <dbReference type="ChEBI" id="CHEBI:29035"/>
        <label>2</label>
    </ligand>
</feature>
<feature type="binding site" evidence="1">
    <location>
        <position position="263"/>
    </location>
    <ligand>
        <name>Mn(2+)</name>
        <dbReference type="ChEBI" id="CHEBI:29035"/>
        <label>1</label>
    </ligand>
</feature>
<feature type="binding site" evidence="1">
    <location>
        <position position="263"/>
    </location>
    <ligand>
        <name>Mn(2+)</name>
        <dbReference type="ChEBI" id="CHEBI:29035"/>
        <label>2</label>
    </ligand>
</feature>
<feature type="binding site" evidence="1">
    <location>
        <position position="282"/>
    </location>
    <ligand>
        <name>Mn(2+)</name>
        <dbReference type="ChEBI" id="CHEBI:29035"/>
        <label>2</label>
    </ligand>
</feature>
<feature type="binding site" evidence="1">
    <location>
        <position position="341"/>
    </location>
    <ligand>
        <name>Mn(2+)</name>
        <dbReference type="ChEBI" id="CHEBI:29035"/>
        <label>1</label>
    </ligand>
</feature>
<feature type="binding site" evidence="1">
    <location>
        <position position="343"/>
    </location>
    <ligand>
        <name>Mn(2+)</name>
        <dbReference type="ChEBI" id="CHEBI:29035"/>
        <label>1</label>
    </ligand>
</feature>
<feature type="binding site" evidence="1">
    <location>
        <position position="343"/>
    </location>
    <ligand>
        <name>Mn(2+)</name>
        <dbReference type="ChEBI" id="CHEBI:29035"/>
        <label>2</label>
    </ligand>
</feature>
<organism>
    <name type="scientific">Microcystis aeruginosa (strain NIES-843 / IAM M-2473)</name>
    <dbReference type="NCBI Taxonomy" id="449447"/>
    <lineage>
        <taxon>Bacteria</taxon>
        <taxon>Bacillati</taxon>
        <taxon>Cyanobacteriota</taxon>
        <taxon>Cyanophyceae</taxon>
        <taxon>Oscillatoriophycideae</taxon>
        <taxon>Chroococcales</taxon>
        <taxon>Microcystaceae</taxon>
        <taxon>Microcystis</taxon>
    </lineage>
</organism>
<name>AMPA_MICAN</name>
<proteinExistence type="inferred from homology"/>
<sequence>MDIRSTDTSLLTWTGDTLALGLPEGAIEIAGELAELNDKLGGNLGDLISETEFEGKLGSSAATRLGGGPIRKLILVGLGKTADFDLQTLRLAAAAIARLAKQQKSQALAISLPVVGDQSATAGAITEGLLLATHQDTRFKSTKEEKGAKLETVELLGLGEQASAIAKSEQICSGVILARELVNAPANTVTPLTMAETAEQIAAEYGLSLNILEQEECESLGMGAFLGVAKASDIPPKFLHLIYKPQGTPKRKLAIVGKSLTFDSGGLNIKGAGSGIETMKMDMGGGAATLGAAKAIAQLQPEVEVHFICPATENMISGRAMHPGDILTASNGKTIEVNNTDAEGRLTLADGLVFAEKLEVDAIVDLATLTGACVIALGDDIAGLWSSDESLAAQIQEAAKLAGEKFWPMPLEEKYFEGMKSQIADMKNTGPRPGGSITAALFLKQFINNTPWLHLDIAGPVWSDKENGVNNSGATGFPVRTLVNWVMANN</sequence>
<accession>B0JL23</accession>